<proteinExistence type="evidence at protein level"/>
<evidence type="ECO:0000250" key="1">
    <source>
        <dbReference type="UniProtKB" id="B0K019"/>
    </source>
</evidence>
<evidence type="ECO:0000250" key="2">
    <source>
        <dbReference type="UniProtKB" id="Q60739"/>
    </source>
</evidence>
<evidence type="ECO:0000255" key="3">
    <source>
        <dbReference type="PROSITE-ProRule" id="PRU00214"/>
    </source>
</evidence>
<evidence type="ECO:0000255" key="4">
    <source>
        <dbReference type="PROSITE-ProRule" id="PRU00369"/>
    </source>
</evidence>
<evidence type="ECO:0000256" key="5">
    <source>
        <dbReference type="SAM" id="MobiDB-lite"/>
    </source>
</evidence>
<evidence type="ECO:0000269" key="6">
    <source>
    </source>
</evidence>
<evidence type="ECO:0000269" key="7">
    <source>
    </source>
</evidence>
<evidence type="ECO:0000269" key="8">
    <source>
    </source>
</evidence>
<evidence type="ECO:0000269" key="9">
    <source>
    </source>
</evidence>
<evidence type="ECO:0000269" key="10">
    <source>
    </source>
</evidence>
<evidence type="ECO:0000269" key="11">
    <source>
    </source>
</evidence>
<evidence type="ECO:0000269" key="12">
    <source>
    </source>
</evidence>
<evidence type="ECO:0000269" key="13">
    <source>
    </source>
</evidence>
<evidence type="ECO:0000269" key="14">
    <source>
    </source>
</evidence>
<evidence type="ECO:0000269" key="15">
    <source>
    </source>
</evidence>
<evidence type="ECO:0000303" key="16">
    <source>
    </source>
</evidence>
<evidence type="ECO:0000305" key="17"/>
<evidence type="ECO:0007744" key="18">
    <source>
    </source>
</evidence>
<evidence type="ECO:0007829" key="19">
    <source>
        <dbReference type="PDB" id="1WXV"/>
    </source>
</evidence>
<evidence type="ECO:0007829" key="20">
    <source>
        <dbReference type="PDB" id="5AQM"/>
    </source>
</evidence>
<evidence type="ECO:0007829" key="21">
    <source>
        <dbReference type="PDB" id="5AQR"/>
    </source>
</evidence>
<gene>
    <name type="primary">BAG1</name>
    <name type="synonym">HAP</name>
</gene>
<comment type="function">
    <text evidence="1 8 10 11 12 15">Co-chaperone for HSP70 and HSC70 chaperone proteins. Acts as a nucleotide-exchange factor (NEF) promoting the release of ADP from the HSP70 and HSC70 proteins thereby triggering client/substrate protein release. Nucleotide release is mediated via its binding to the nucleotide-binding domain (NBD) of HSPA8/HSC70 where as the substrate release is mediated via its binding to the substrate-binding domain (SBD) of HSPA8/HSC70 (PubMed:24318877, PubMed:27474739, PubMed:9873016). Inhibits the pro-apoptotic function of PPP1R15A, and has anti-apoptotic activity (PubMed:12724406). Markedly increases the anti-cell death function of BCL2 induced by various stimuli (PubMed:9305631). Involved in the STUB1-mediated proteasomal degradation of ESR1 in response to age-related circulating estradiol (17-beta-estradiol/E2) decline, thereby promotes neuronal apoptosis in response to ischemic reperfusion injury (By similarity).</text>
</comment>
<comment type="subunit">
    <text evidence="1 2 6 7 8 9 10 11 12 13 14">Homodimer. Forms a heteromeric complex with HSP70/HSC70 (PubMed:9305631). Binds to the ATPase domain of HSP/HSC70 chaperones. Isoform 1, isoform 3 and isoform 4 but not isoform 2 interact with HSPA8/HSC70 (PubMed:24318877, PubMed:27474739, PubMed:9305631, PubMed:9679980). Interacts with NR3C1 (PubMed:10477749). Interacts with the N-terminal region of MAPRE2 (PubMed:15986447). Interacts with PPP1R15A (PubMed:12724406). Interacts with BCL2 in an ATP-dependent manner. Isoform 2 does not interact with BCL2 (PubMed:9305631). Interacts with SIAH1 (PubMed:9582267). Interacts with HSPA8 (via NBD) (PubMed:24318877, PubMed:27474739). Interacts with HSPA1A (via NBD) and HSPA1B (via NBD) (PubMed:24318877). Interacts with SIAH2 (By similarity). Interacts with ESR1; the interaction is promoted in the absence of estradiol (17-beta-estradiol/E2) (By similarity).</text>
</comment>
<comment type="interaction">
    <interactant intactId="EBI-1030678">
        <id>Q99933</id>
    </interactant>
    <interactant intactId="EBI-351896">
        <id>P11142</id>
        <label>HSPA8</label>
    </interactant>
    <organismsDiffer>false</organismsDiffer>
    <experiments>13</experiments>
</comment>
<comment type="interaction">
    <interactant intactId="EBI-1030678">
        <id>Q99933</id>
    </interactant>
    <interactant intactId="EBI-10289199">
        <id>Q96IS6</id>
        <label>HSPA8</label>
    </interactant>
    <organismsDiffer>false</organismsDiffer>
    <experiments>5</experiments>
</comment>
<comment type="interaction">
    <interactant intactId="EBI-1030678">
        <id>Q99933</id>
    </interactant>
    <interactant intactId="EBI-1051875">
        <id>Q15773</id>
        <label>MLF2</label>
    </interactant>
    <organismsDiffer>false</organismsDiffer>
    <experiments>2</experiments>
</comment>
<comment type="interaction">
    <interactant intactId="EBI-1030678">
        <id>Q99933</id>
    </interactant>
    <interactant intactId="EBI-357648">
        <id>Q13200</id>
        <label>PSMD2</label>
    </interactant>
    <organismsDiffer>false</organismsDiffer>
    <experiments>9</experiments>
</comment>
<comment type="interaction">
    <interactant intactId="EBI-1030678">
        <id>Q99933</id>
    </interactant>
    <interactant intactId="EBI-357085">
        <id>Q9UNE7</id>
        <label>STUB1</label>
    </interactant>
    <organismsDiffer>false</organismsDiffer>
    <experiments>2</experiments>
</comment>
<comment type="interaction">
    <interactant intactId="EBI-1030678">
        <id>Q99933</id>
    </interactant>
    <interactant intactId="EBI-740098">
        <id>P36406</id>
        <label>TRIM23</label>
    </interactant>
    <organismsDiffer>false</organismsDiffer>
    <experiments>5</experiments>
</comment>
<comment type="interaction">
    <interactant intactId="EBI-1030678">
        <id>Q99933</id>
    </interactant>
    <interactant intactId="EBI-719493">
        <id>P14373</id>
        <label>TRIM27</label>
    </interactant>
    <organismsDiffer>false</organismsDiffer>
    <experiments>7</experiments>
</comment>
<comment type="interaction">
    <interactant intactId="EBI-1030678">
        <id>Q99933</id>
    </interactant>
    <interactant intactId="EBI-9356749">
        <id>Q53FC7</id>
    </interactant>
    <organismsDiffer>false</organismsDiffer>
    <experiments>2</experiments>
</comment>
<comment type="interaction">
    <interactant intactId="EBI-1030678">
        <id>Q99933</id>
    </interactant>
    <interactant intactId="EBI-9356686">
        <id>Q96BE0</id>
    </interactant>
    <organismsDiffer>false</organismsDiffer>
    <experiments>2</experiments>
</comment>
<comment type="subcellular location">
    <molecule>Isoform 1</molecule>
    <subcellularLocation>
        <location>Nucleus</location>
    </subcellularLocation>
    <subcellularLocation>
        <location>Cytoplasm</location>
    </subcellularLocation>
    <text>Isoform 1 localizes predominantly to the nucleus.</text>
</comment>
<comment type="subcellular location">
    <molecule>Isoform 2</molecule>
    <subcellularLocation>
        <location>Cytoplasm</location>
    </subcellularLocation>
    <subcellularLocation>
        <location>Nucleus</location>
    </subcellularLocation>
    <text>Isoform 2 localizes to the cytoplasm and shuttles into the nucleus in response to heat shock.</text>
</comment>
<comment type="subcellular location">
    <molecule>Isoform 4</molecule>
    <subcellularLocation>
        <location>Cytoplasm</location>
    </subcellularLocation>
    <subcellularLocation>
        <location>Nucleus</location>
    </subcellularLocation>
    <text>Isoform 4 localizes predominantly to the cytoplasm. The cellular background in which it is expressed can influence whether it resides primarily in the cytoplasm or is also found in the nucleus. In the presence of BCL2, localizes to intracellular membranes (what appears to be the nuclear envelope and perinuclear membranes) as well as punctate cytosolic structures suggestive of mitochondria.</text>
</comment>
<comment type="alternative products">
    <event type="alternative splicing"/>
    <event type="alternative initiation"/>
    <isoform>
        <id>Q99933-1</id>
        <name>1</name>
        <name>BAG-1L</name>
        <name>p50</name>
        <sequence type="displayed"/>
    </isoform>
    <isoform>
        <id>Q99933-2</id>
        <name>2</name>
        <name>BAG1V</name>
        <name>HAPV</name>
        <sequence type="described" ref="VSP_000453"/>
    </isoform>
    <isoform>
        <id>Q99933-3</id>
        <name>3</name>
        <name>BAG-1M</name>
        <name>RAP46</name>
        <sequence type="described" ref="VSP_038395"/>
    </isoform>
    <isoform>
        <id>Q99933-4</id>
        <name>4</name>
        <name>BAG-1</name>
        <name>p32</name>
        <sequence type="described" ref="VSP_038394"/>
    </isoform>
</comment>
<comment type="tissue specificity">
    <text evidence="14">Isoform 4 is the most abundantly expressed isoform. It is ubiquitously expressed throughout most tissues, except the liver, colon, breast and uterine myometrium. Isoform 1 is expressed in the ovary and testis. Isoform 4 is expressed in several types of tumor cell lines, and at consistently high levels in leukemia and lymphoma cell lines. Isoform 1 is expressed in the prostate, breast and leukemia cell lines. Isoform 3 is the least abundant isoform in tumor cell lines (at protein level).</text>
</comment>
<comment type="induction">
    <text evidence="14">Up-regulated during differentiation of bladder epithelial cells and down-regulated during differentiation of prostate epithelium.</text>
</comment>
<comment type="PTM">
    <text evidence="17">Ubiquitinated; mediated by SIAH1 or SIAH2 and leading to its subsequent proteasomal degradation.</text>
</comment>
<comment type="miscellaneous">
    <molecule>Isoform 2</molecule>
    <text evidence="17">Produced by alternative splicing.</text>
</comment>
<comment type="miscellaneous">
    <molecule>Isoform 3</molecule>
    <text evidence="17">Produced by alternative initiation at Met-72 of isoform 1.</text>
</comment>
<comment type="miscellaneous">
    <molecule>Isoform 4</molecule>
    <text evidence="17">Produced by alternative initiation at Met-116 of isoform 1.</text>
</comment>
<comment type="sequence caution" evidence="17">
    <conflict type="erroneous initiation">
        <sequence resource="EMBL-CDS" id="AAD11467"/>
    </conflict>
    <text>Truncated N-terminus.</text>
</comment>
<comment type="sequence caution" evidence="17">
    <conflict type="erroneous initiation">
        <sequence resource="EMBL-CDS" id="AAD25045"/>
    </conflict>
    <text>Truncated N-terminus.</text>
</comment>
<comment type="sequence caution" evidence="17">
    <conflict type="miscellaneous discrepancy">
        <sequence resource="EMBL-CDS" id="BAD96469"/>
    </conflict>
    <text>Unusual initiator. The initiator methionine is coded by a non-canonical CTG leucine codon.</text>
</comment>
<comment type="sequence caution" evidence="17">
    <conflict type="erroneous initiation">
        <sequence resource="EMBL-CDS" id="CAA84624"/>
    </conflict>
    <text>Truncated N-terminus.</text>
</comment>
<comment type="sequence caution" evidence="17">
    <conflict type="erroneous gene model prediction">
        <sequence resource="EMBL-CDS" id="EAW58515"/>
    </conflict>
</comment>
<comment type="online information" name="Atlas of Genetics and Cytogenetics in Oncology and Haematology">
    <link uri="https://atlasgeneticsoncology.org/gene/742/BAG1"/>
</comment>
<keyword id="KW-0002">3D-structure</keyword>
<keyword id="KW-0024">Alternative initiation</keyword>
<keyword id="KW-0025">Alternative splicing</keyword>
<keyword id="KW-0053">Apoptosis</keyword>
<keyword id="KW-0143">Chaperone</keyword>
<keyword id="KW-0963">Cytoplasm</keyword>
<keyword id="KW-0539">Nucleus</keyword>
<keyword id="KW-0597">Phosphoprotein</keyword>
<keyword id="KW-1267">Proteomics identification</keyword>
<keyword id="KW-1185">Reference proteome</keyword>
<keyword id="KW-0677">Repeat</keyword>
<keyword id="KW-0832">Ubl conjugation</keyword>
<sequence length="345" mass="38779">MAQRGGARRPRGDRERLGSRLRALRPGREPRQSEPPAQRGPPPSGRPPARSTASGHDRPTRGAAAGARRPRMKKKTRRRSTRSEELTRSEELTLSEEATWSEEATQSEEATQGEEMNRSQEVTRDEESTRSEEVTREEMAAAGLTVTVTHSNEKHDLHVTSQQGSSEPVVQDLAQVVEEVIGVPQSFQKLIFKGKSLKEMETPLSALGIQDGCRVMLIGKKNSPQEEVELKKLKHLEKSVEKIADQLEELNKELTGIQQGFLPKDLQAEALCKLDRRVKATIEQFMKILEEIDTLILPENFKDSRLKRKGLVKKVQAFLAECDTVEQNICQETERLQSTNFALAE</sequence>
<feature type="chain" id="PRO_0000088865" description="BAG family molecular chaperone regulator 1">
    <location>
        <begin position="1"/>
        <end position="345"/>
    </location>
</feature>
<feature type="repeat" description="1">
    <location>
        <begin position="96"/>
        <end position="101"/>
    </location>
</feature>
<feature type="repeat" description="2">
    <location>
        <begin position="102"/>
        <end position="107"/>
    </location>
</feature>
<feature type="repeat" description="3">
    <location>
        <begin position="108"/>
        <end position="113"/>
    </location>
</feature>
<feature type="repeat" description="4">
    <location>
        <begin position="114"/>
        <end position="119"/>
    </location>
</feature>
<feature type="repeat" description="5">
    <location>
        <begin position="120"/>
        <end position="125"/>
    </location>
</feature>
<feature type="repeat" description="6">
    <location>
        <begin position="126"/>
        <end position="131"/>
    </location>
</feature>
<feature type="repeat" description="7">
    <location>
        <begin position="132"/>
        <end position="137"/>
    </location>
</feature>
<feature type="domain" description="Ubiquitin-like" evidence="3">
    <location>
        <begin position="144"/>
        <end position="224"/>
    </location>
</feature>
<feature type="domain" description="BAG" evidence="4">
    <location>
        <begin position="246"/>
        <end position="326"/>
    </location>
</feature>
<feature type="region of interest" description="Disordered" evidence="5">
    <location>
        <begin position="1"/>
        <end position="137"/>
    </location>
</feature>
<feature type="region of interest" description="7 X 6 AA tandem repeat of E-E-X(4)">
    <location>
        <begin position="96"/>
        <end position="137"/>
    </location>
</feature>
<feature type="region of interest" description="Interaction with HSPA8">
    <location>
        <begin position="172"/>
        <end position="219"/>
    </location>
</feature>
<feature type="region of interest" description="Interaction with PPP1R15A" evidence="8">
    <location>
        <begin position="216"/>
        <end position="345"/>
    </location>
</feature>
<feature type="compositionally biased region" description="Basic residues" evidence="5">
    <location>
        <begin position="68"/>
        <end position="80"/>
    </location>
</feature>
<feature type="compositionally biased region" description="Basic and acidic residues" evidence="5">
    <location>
        <begin position="81"/>
        <end position="91"/>
    </location>
</feature>
<feature type="compositionally biased region" description="Low complexity" evidence="5">
    <location>
        <begin position="95"/>
        <end position="114"/>
    </location>
</feature>
<feature type="compositionally biased region" description="Basic and acidic residues" evidence="5">
    <location>
        <begin position="115"/>
        <end position="137"/>
    </location>
</feature>
<feature type="modified residue" description="Phosphoserine" evidence="18">
    <location>
        <position position="223"/>
    </location>
</feature>
<feature type="splice variant" id="VSP_038394" description="In isoform 4." evidence="17">
    <location>
        <begin position="1"/>
        <end position="115"/>
    </location>
</feature>
<feature type="splice variant" id="VSP_038395" description="In isoform 3." evidence="17">
    <location>
        <begin position="1"/>
        <end position="71"/>
    </location>
</feature>
<feature type="splice variant" id="VSP_000453" description="In isoform 2." evidence="16">
    <original>KDSRLKRKGLVKKVQAFLAECDTVEQNICQETERLQSTNFALAE</original>
    <variation>PTLTLVLNEK</variation>
    <location>
        <begin position="302"/>
        <end position="345"/>
    </location>
</feature>
<feature type="mutagenesis site" description="Significant loss of interaction with HSPA8." evidence="11">
    <original>RK</original>
    <variation>AA</variation>
    <location>
        <begin position="308"/>
        <end position="309"/>
    </location>
</feature>
<feature type="sequence conflict" description="In Ref. 2; AAC34258, 5; BAD96469 and 8; AAH01936/AAH14774." evidence="17" ref="2 5 8">
    <original>G</original>
    <variation>R</variation>
    <location>
        <position position="45"/>
    </location>
</feature>
<feature type="sequence conflict" description="In Ref. 2; AAD11467." evidence="17" ref="2">
    <original>R</original>
    <variation>F</variation>
    <location>
        <position position="79"/>
    </location>
</feature>
<feature type="sequence conflict" description="In Ref. 2; AAD11467." evidence="17" ref="2">
    <original>E</original>
    <variation>K</variation>
    <location>
        <position position="84"/>
    </location>
</feature>
<feature type="sequence conflict" description="In Ref. 2; AAD11467." evidence="17" ref="2">
    <original>E</original>
    <variation>K</variation>
    <location>
        <position position="90"/>
    </location>
</feature>
<feature type="sequence conflict" description="In Ref. 2; AAD11467." evidence="17" ref="2">
    <original>D</original>
    <variation>N</variation>
    <location>
        <position position="245"/>
    </location>
</feature>
<feature type="sequence conflict" description="In Ref. 2; AAD11467." evidence="17" ref="2">
    <original>D</original>
    <variation>H</variation>
    <location>
        <position position="293"/>
    </location>
</feature>
<feature type="strand" evidence="19">
    <location>
        <begin position="144"/>
        <end position="149"/>
    </location>
</feature>
<feature type="strand" evidence="19">
    <location>
        <begin position="151"/>
        <end position="159"/>
    </location>
</feature>
<feature type="strand" evidence="19">
    <location>
        <begin position="163"/>
        <end position="167"/>
    </location>
</feature>
<feature type="helix" evidence="19">
    <location>
        <begin position="170"/>
        <end position="180"/>
    </location>
</feature>
<feature type="turn" evidence="19">
    <location>
        <begin position="185"/>
        <end position="187"/>
    </location>
</feature>
<feature type="strand" evidence="19">
    <location>
        <begin position="189"/>
        <end position="192"/>
    </location>
</feature>
<feature type="strand" evidence="19">
    <location>
        <begin position="195"/>
        <end position="197"/>
    </location>
</feature>
<feature type="strand" evidence="19">
    <location>
        <begin position="200"/>
        <end position="203"/>
    </location>
</feature>
<feature type="helix" evidence="19">
    <location>
        <begin position="204"/>
        <end position="207"/>
    </location>
</feature>
<feature type="strand" evidence="19">
    <location>
        <begin position="211"/>
        <end position="219"/>
    </location>
</feature>
<feature type="helix" evidence="20">
    <location>
        <begin position="224"/>
        <end position="259"/>
    </location>
</feature>
<feature type="strand" evidence="21">
    <location>
        <begin position="260"/>
        <end position="262"/>
    </location>
</feature>
<feature type="helix" evidence="20">
    <location>
        <begin position="264"/>
        <end position="272"/>
    </location>
</feature>
<feature type="helix" evidence="20">
    <location>
        <begin position="275"/>
        <end position="292"/>
    </location>
</feature>
<feature type="helix" evidence="20">
    <location>
        <begin position="302"/>
        <end position="327"/>
    </location>
</feature>
<protein>
    <recommendedName>
        <fullName>BAG family molecular chaperone regulator 1</fullName>
        <shortName>BAG-1</shortName>
    </recommendedName>
    <alternativeName>
        <fullName>Bcl-2-associated athanogene 1</fullName>
    </alternativeName>
</protein>
<dbReference type="EMBL" id="Z35491">
    <property type="protein sequence ID" value="CAA84624.1"/>
    <property type="status" value="ALT_INIT"/>
    <property type="molecule type" value="mRNA"/>
</dbReference>
<dbReference type="EMBL" id="U46917">
    <property type="protein sequence ID" value="AAD11467.1"/>
    <property type="status" value="ALT_INIT"/>
    <property type="molecule type" value="mRNA"/>
</dbReference>
<dbReference type="EMBL" id="AF022224">
    <property type="protein sequence ID" value="AAC34258.1"/>
    <property type="molecule type" value="mRNA"/>
</dbReference>
<dbReference type="EMBL" id="AF116273">
    <property type="protein sequence ID" value="AAD25045.1"/>
    <property type="status" value="ALT_INIT"/>
    <property type="molecule type" value="mRNA"/>
</dbReference>
<dbReference type="EMBL" id="AK222749">
    <property type="protein sequence ID" value="BAD96469.1"/>
    <property type="status" value="ALT_INIT"/>
    <property type="molecule type" value="mRNA"/>
</dbReference>
<dbReference type="EMBL" id="AL161445">
    <property type="status" value="NOT_ANNOTATED_CDS"/>
    <property type="molecule type" value="Genomic_DNA"/>
</dbReference>
<dbReference type="EMBL" id="AL356472">
    <property type="status" value="NOT_ANNOTATED_CDS"/>
    <property type="molecule type" value="Genomic_DNA"/>
</dbReference>
<dbReference type="EMBL" id="CH471071">
    <property type="protein sequence ID" value="EAW58514.1"/>
    <property type="molecule type" value="Genomic_DNA"/>
</dbReference>
<dbReference type="EMBL" id="CH471071">
    <property type="protein sequence ID" value="EAW58515.1"/>
    <property type="status" value="ALT_SEQ"/>
    <property type="molecule type" value="Genomic_DNA"/>
</dbReference>
<dbReference type="EMBL" id="BC001936">
    <property type="protein sequence ID" value="AAH01936.2"/>
    <property type="molecule type" value="mRNA"/>
</dbReference>
<dbReference type="EMBL" id="BC014774">
    <property type="protein sequence ID" value="AAH14774.2"/>
    <property type="molecule type" value="mRNA"/>
</dbReference>
<dbReference type="CCDS" id="CCDS35004.1">
    <molecule id="Q99933-1"/>
</dbReference>
<dbReference type="CCDS" id="CCDS55301.1">
    <molecule id="Q99933-4"/>
</dbReference>
<dbReference type="RefSeq" id="NP_001165886.1">
    <molecule id="Q99933-4"/>
    <property type="nucleotide sequence ID" value="NM_001172415.2"/>
</dbReference>
<dbReference type="RefSeq" id="NP_001336215.1">
    <molecule id="Q99933-3"/>
    <property type="nucleotide sequence ID" value="NM_001349286.2"/>
</dbReference>
<dbReference type="RefSeq" id="NP_004314.5">
    <molecule id="Q99933-1"/>
    <property type="nucleotide sequence ID" value="NM_004323.5"/>
</dbReference>
<dbReference type="PDB" id="1HX1">
    <property type="method" value="X-ray"/>
    <property type="resolution" value="1.90 A"/>
    <property type="chains" value="B=222-334"/>
</dbReference>
<dbReference type="PDB" id="1WXV">
    <property type="method" value="NMR"/>
    <property type="chains" value="A=144-222"/>
</dbReference>
<dbReference type="PDB" id="3FZF">
    <property type="method" value="X-ray"/>
    <property type="resolution" value="2.20 A"/>
    <property type="chains" value="B=222-334"/>
</dbReference>
<dbReference type="PDB" id="3FZH">
    <property type="method" value="X-ray"/>
    <property type="resolution" value="2.00 A"/>
    <property type="chains" value="B=222-334"/>
</dbReference>
<dbReference type="PDB" id="3FZK">
    <property type="method" value="X-ray"/>
    <property type="resolution" value="2.10 A"/>
    <property type="chains" value="B=222-334"/>
</dbReference>
<dbReference type="PDB" id="3FZL">
    <property type="method" value="X-ray"/>
    <property type="resolution" value="2.20 A"/>
    <property type="chains" value="B=222-334"/>
</dbReference>
<dbReference type="PDB" id="3FZM">
    <property type="method" value="X-ray"/>
    <property type="resolution" value="2.30 A"/>
    <property type="chains" value="B=222-334"/>
</dbReference>
<dbReference type="PDB" id="3LDQ">
    <property type="method" value="X-ray"/>
    <property type="resolution" value="1.90 A"/>
    <property type="chains" value="B=222-334"/>
</dbReference>
<dbReference type="PDB" id="3M3Z">
    <property type="method" value="X-ray"/>
    <property type="resolution" value="2.10 A"/>
    <property type="chains" value="B=222-334"/>
</dbReference>
<dbReference type="PDB" id="5AQF">
    <property type="method" value="X-ray"/>
    <property type="resolution" value="1.88 A"/>
    <property type="chains" value="B/D=222-334"/>
</dbReference>
<dbReference type="PDB" id="5AQG">
    <property type="method" value="X-ray"/>
    <property type="resolution" value="2.24 A"/>
    <property type="chains" value="B/D/F=222-334"/>
</dbReference>
<dbReference type="PDB" id="5AQH">
    <property type="method" value="X-ray"/>
    <property type="resolution" value="2.00 A"/>
    <property type="chains" value="B=222-334"/>
</dbReference>
<dbReference type="PDB" id="5AQI">
    <property type="method" value="X-ray"/>
    <property type="resolution" value="1.98 A"/>
    <property type="chains" value="B/D=222-334"/>
</dbReference>
<dbReference type="PDB" id="5AQJ">
    <property type="method" value="X-ray"/>
    <property type="resolution" value="1.96 A"/>
    <property type="chains" value="B/D/F=222-334"/>
</dbReference>
<dbReference type="PDB" id="5AQK">
    <property type="method" value="X-ray"/>
    <property type="resolution" value="2.09 A"/>
    <property type="chains" value="B=222-334"/>
</dbReference>
<dbReference type="PDB" id="5AQL">
    <property type="method" value="X-ray"/>
    <property type="resolution" value="1.69 A"/>
    <property type="chains" value="B/D=222-334"/>
</dbReference>
<dbReference type="PDB" id="5AQM">
    <property type="method" value="X-ray"/>
    <property type="resolution" value="1.63 A"/>
    <property type="chains" value="B/D=222-334"/>
</dbReference>
<dbReference type="PDB" id="5AQN">
    <property type="method" value="X-ray"/>
    <property type="resolution" value="2.45 A"/>
    <property type="chains" value="B/D/F=222-334"/>
</dbReference>
<dbReference type="PDB" id="5AQO">
    <property type="method" value="X-ray"/>
    <property type="resolution" value="2.12 A"/>
    <property type="chains" value="B/D/F=222-334"/>
</dbReference>
<dbReference type="PDB" id="5AQP">
    <property type="method" value="X-ray"/>
    <property type="resolution" value="2.08 A"/>
    <property type="chains" value="B/D/F=222-334"/>
</dbReference>
<dbReference type="PDB" id="5AQQ">
    <property type="method" value="X-ray"/>
    <property type="resolution" value="2.72 A"/>
    <property type="chains" value="B/D/F=222-334"/>
</dbReference>
<dbReference type="PDB" id="5AQR">
    <property type="method" value="X-ray"/>
    <property type="resolution" value="1.91 A"/>
    <property type="chains" value="B/D/F=222-334"/>
</dbReference>
<dbReference type="PDB" id="5AQS">
    <property type="method" value="X-ray"/>
    <property type="resolution" value="2.00 A"/>
    <property type="chains" value="B/D=222-334"/>
</dbReference>
<dbReference type="PDB" id="5AQT">
    <property type="method" value="X-ray"/>
    <property type="resolution" value="1.90 A"/>
    <property type="chains" value="B=222-334"/>
</dbReference>
<dbReference type="PDB" id="5AQU">
    <property type="method" value="X-ray"/>
    <property type="resolution" value="1.92 A"/>
    <property type="chains" value="B=222-334"/>
</dbReference>
<dbReference type="PDB" id="5AQV">
    <property type="method" value="X-ray"/>
    <property type="resolution" value="1.75 A"/>
    <property type="chains" value="B=222-334"/>
</dbReference>
<dbReference type="PDBsum" id="1HX1"/>
<dbReference type="PDBsum" id="1WXV"/>
<dbReference type="PDBsum" id="3FZF"/>
<dbReference type="PDBsum" id="3FZH"/>
<dbReference type="PDBsum" id="3FZK"/>
<dbReference type="PDBsum" id="3FZL"/>
<dbReference type="PDBsum" id="3FZM"/>
<dbReference type="PDBsum" id="3LDQ"/>
<dbReference type="PDBsum" id="3M3Z"/>
<dbReference type="PDBsum" id="5AQF"/>
<dbReference type="PDBsum" id="5AQG"/>
<dbReference type="PDBsum" id="5AQH"/>
<dbReference type="PDBsum" id="5AQI"/>
<dbReference type="PDBsum" id="5AQJ"/>
<dbReference type="PDBsum" id="5AQK"/>
<dbReference type="PDBsum" id="5AQL"/>
<dbReference type="PDBsum" id="5AQM"/>
<dbReference type="PDBsum" id="5AQN"/>
<dbReference type="PDBsum" id="5AQO"/>
<dbReference type="PDBsum" id="5AQP"/>
<dbReference type="PDBsum" id="5AQQ"/>
<dbReference type="PDBsum" id="5AQR"/>
<dbReference type="PDBsum" id="5AQS"/>
<dbReference type="PDBsum" id="5AQT"/>
<dbReference type="PDBsum" id="5AQU"/>
<dbReference type="PDBsum" id="5AQV"/>
<dbReference type="SMR" id="Q99933"/>
<dbReference type="BioGRID" id="107049">
    <property type="interactions" value="483"/>
</dbReference>
<dbReference type="CORUM" id="Q99933"/>
<dbReference type="DIP" id="DIP-3341N"/>
<dbReference type="FunCoup" id="Q99933">
    <property type="interactions" value="2373"/>
</dbReference>
<dbReference type="IntAct" id="Q99933">
    <property type="interactions" value="127"/>
</dbReference>
<dbReference type="MINT" id="Q99933"/>
<dbReference type="STRING" id="9606.ENSP00000489189"/>
<dbReference type="DrugBank" id="DB07045">
    <property type="generic name" value="(2R,3R,4S,5R)-2-[6-amino-8-[(3,4-dichlorophenyl)methylamino]purin-9-yl]-5-(hydroxymethyl)oxolane-3,4-diol"/>
</dbReference>
<dbReference type="GlyGen" id="Q99933">
    <property type="glycosylation" value="1 site, 1 O-linked glycan (1 site)"/>
</dbReference>
<dbReference type="iPTMnet" id="Q99933"/>
<dbReference type="PhosphoSitePlus" id="Q99933"/>
<dbReference type="BioMuta" id="BAG1"/>
<dbReference type="DMDM" id="296439462"/>
<dbReference type="jPOST" id="Q99933"/>
<dbReference type="MassIVE" id="Q99933"/>
<dbReference type="PaxDb" id="9606-ENSP00000420514"/>
<dbReference type="PeptideAtlas" id="Q99933"/>
<dbReference type="ProteomicsDB" id="78526">
    <molecule id="Q99933-1"/>
</dbReference>
<dbReference type="ProteomicsDB" id="78527">
    <molecule id="Q99933-2"/>
</dbReference>
<dbReference type="ProteomicsDB" id="78528">
    <molecule id="Q99933-3"/>
</dbReference>
<dbReference type="ProteomicsDB" id="78529">
    <molecule id="Q99933-4"/>
</dbReference>
<dbReference type="Pumba" id="Q99933"/>
<dbReference type="Antibodypedia" id="2968">
    <property type="antibodies" value="550 antibodies from 41 providers"/>
</dbReference>
<dbReference type="DNASU" id="573"/>
<dbReference type="Ensembl" id="ENST00000379704.7">
    <molecule id="Q99933-4"/>
    <property type="protein sequence ID" value="ENSP00000369026.2"/>
    <property type="gene ID" value="ENSG00000107262.26"/>
</dbReference>
<dbReference type="Ensembl" id="ENST00000634734.3">
    <molecule id="Q99933-1"/>
    <property type="protein sequence ID" value="ENSP00000489189.2"/>
    <property type="gene ID" value="ENSG00000107262.26"/>
</dbReference>
<dbReference type="GeneID" id="573"/>
<dbReference type="KEGG" id="hsa:573"/>
<dbReference type="MANE-Select" id="ENST00000634734.3">
    <property type="protein sequence ID" value="ENSP00000489189.2"/>
    <property type="RefSeq nucleotide sequence ID" value="NM_004323.6"/>
    <property type="RefSeq protein sequence ID" value="NP_004314.6"/>
</dbReference>
<dbReference type="UCSC" id="uc064sos.1">
    <molecule id="Q99933-1"/>
    <property type="organism name" value="human"/>
</dbReference>
<dbReference type="AGR" id="HGNC:937"/>
<dbReference type="CTD" id="573"/>
<dbReference type="DisGeNET" id="573"/>
<dbReference type="GeneCards" id="BAG1"/>
<dbReference type="HGNC" id="HGNC:937">
    <property type="gene designation" value="BAG1"/>
</dbReference>
<dbReference type="HPA" id="ENSG00000107262">
    <property type="expression patterns" value="Low tissue specificity"/>
</dbReference>
<dbReference type="MIM" id="601497">
    <property type="type" value="gene"/>
</dbReference>
<dbReference type="neXtProt" id="NX_Q99933"/>
<dbReference type="OpenTargets" id="ENSG00000107262"/>
<dbReference type="PharmGKB" id="PA25237"/>
<dbReference type="VEuPathDB" id="HostDB:ENSG00000107262"/>
<dbReference type="eggNOG" id="ENOG502RN5W">
    <property type="taxonomic scope" value="Eukaryota"/>
</dbReference>
<dbReference type="GeneTree" id="ENSGT00450000040296"/>
<dbReference type="HOGENOM" id="CLU_055378_0_1_1"/>
<dbReference type="InParanoid" id="Q99933"/>
<dbReference type="OMA" id="HSECNEK"/>
<dbReference type="OrthoDB" id="417450at2759"/>
<dbReference type="PAN-GO" id="Q99933">
    <property type="GO annotations" value="7 GO annotations based on evolutionary models"/>
</dbReference>
<dbReference type="PhylomeDB" id="Q99933"/>
<dbReference type="PathwayCommons" id="Q99933"/>
<dbReference type="Reactome" id="R-HSA-3371453">
    <property type="pathway name" value="Regulation of HSF1-mediated heat shock response"/>
</dbReference>
<dbReference type="SignaLink" id="Q99933"/>
<dbReference type="SIGNOR" id="Q99933"/>
<dbReference type="BioGRID-ORCS" id="573">
    <property type="hits" value="14 hits in 1168 CRISPR screens"/>
</dbReference>
<dbReference type="ChiTaRS" id="BAG1">
    <property type="organism name" value="human"/>
</dbReference>
<dbReference type="EvolutionaryTrace" id="Q99933"/>
<dbReference type="GeneWiki" id="BAG1"/>
<dbReference type="GenomeRNAi" id="573"/>
<dbReference type="Pharos" id="Q99933">
    <property type="development level" value="Tbio"/>
</dbReference>
<dbReference type="PRO" id="PR:Q99933"/>
<dbReference type="Proteomes" id="UP000005640">
    <property type="component" value="Chromosome 9"/>
</dbReference>
<dbReference type="RNAct" id="Q99933">
    <property type="molecule type" value="protein"/>
</dbReference>
<dbReference type="Bgee" id="ENSG00000107262">
    <property type="expression patterns" value="Expressed in palpebral conjunctiva and 213 other cell types or tissues"/>
</dbReference>
<dbReference type="ExpressionAtlas" id="Q99933">
    <property type="expression patterns" value="baseline and differential"/>
</dbReference>
<dbReference type="GO" id="GO:0005737">
    <property type="term" value="C:cytoplasm"/>
    <property type="evidence" value="ECO:0000318"/>
    <property type="project" value="GO_Central"/>
</dbReference>
<dbReference type="GO" id="GO:0005829">
    <property type="term" value="C:cytosol"/>
    <property type="evidence" value="ECO:0000314"/>
    <property type="project" value="HPA"/>
</dbReference>
<dbReference type="GO" id="GO:0016020">
    <property type="term" value="C:membrane"/>
    <property type="evidence" value="ECO:0000318"/>
    <property type="project" value="GO_Central"/>
</dbReference>
<dbReference type="GO" id="GO:0005654">
    <property type="term" value="C:nucleoplasm"/>
    <property type="evidence" value="ECO:0000314"/>
    <property type="project" value="HPA"/>
</dbReference>
<dbReference type="GO" id="GO:0005634">
    <property type="term" value="C:nucleus"/>
    <property type="evidence" value="ECO:0000314"/>
    <property type="project" value="UniProtKB"/>
</dbReference>
<dbReference type="GO" id="GO:0000774">
    <property type="term" value="F:adenyl-nucleotide exchange factor activity"/>
    <property type="evidence" value="ECO:0000314"/>
    <property type="project" value="UniProtKB"/>
</dbReference>
<dbReference type="GO" id="GO:0051087">
    <property type="term" value="F:protein-folding chaperone binding"/>
    <property type="evidence" value="ECO:0000318"/>
    <property type="project" value="GO_Central"/>
</dbReference>
<dbReference type="GO" id="GO:0031625">
    <property type="term" value="F:ubiquitin protein ligase binding"/>
    <property type="evidence" value="ECO:0000353"/>
    <property type="project" value="ARUK-UCL"/>
</dbReference>
<dbReference type="GO" id="GO:0006915">
    <property type="term" value="P:apoptotic process"/>
    <property type="evidence" value="ECO:0007669"/>
    <property type="project" value="UniProtKB-KW"/>
</dbReference>
<dbReference type="GO" id="GO:0007166">
    <property type="term" value="P:cell surface receptor signaling pathway"/>
    <property type="evidence" value="ECO:0000304"/>
    <property type="project" value="ProtInc"/>
</dbReference>
<dbReference type="GO" id="GO:0051085">
    <property type="term" value="P:chaperone cofactor-dependent protein refolding"/>
    <property type="evidence" value="ECO:0000314"/>
    <property type="project" value="UniProtKB"/>
</dbReference>
<dbReference type="GO" id="GO:0043066">
    <property type="term" value="P:negative regulation of apoptotic process"/>
    <property type="evidence" value="ECO:0000304"/>
    <property type="project" value="ProtInc"/>
</dbReference>
<dbReference type="GO" id="GO:0034393">
    <property type="term" value="P:positive regulation of smooth muscle cell apoptotic process"/>
    <property type="evidence" value="ECO:0000250"/>
    <property type="project" value="UniProtKB"/>
</dbReference>
<dbReference type="GO" id="GO:0050821">
    <property type="term" value="P:protein stabilization"/>
    <property type="evidence" value="ECO:0000318"/>
    <property type="project" value="GO_Central"/>
</dbReference>
<dbReference type="CDD" id="cd01812">
    <property type="entry name" value="Ubl_BAG1"/>
    <property type="match status" value="1"/>
</dbReference>
<dbReference type="FunFam" id="1.20.58.120:FF:000005">
    <property type="entry name" value="BAG family molecular chaperone regulator 1"/>
    <property type="match status" value="1"/>
</dbReference>
<dbReference type="FunFam" id="3.10.20.90:FF:000237">
    <property type="entry name" value="BAG family molecular chaperone regulator 1"/>
    <property type="match status" value="1"/>
</dbReference>
<dbReference type="Gene3D" id="1.20.58.120">
    <property type="entry name" value="BAG domain"/>
    <property type="match status" value="1"/>
</dbReference>
<dbReference type="Gene3D" id="3.10.20.90">
    <property type="entry name" value="Phosphatidylinositol 3-kinase Catalytic Subunit, Chain A, domain 1"/>
    <property type="match status" value="1"/>
</dbReference>
<dbReference type="IDEAL" id="IID00495"/>
<dbReference type="InterPro" id="IPR039773">
    <property type="entry name" value="BAG_chaperone_regulator"/>
</dbReference>
<dbReference type="InterPro" id="IPR036533">
    <property type="entry name" value="BAG_dom_sf"/>
</dbReference>
<dbReference type="InterPro" id="IPR003103">
    <property type="entry name" value="BAG_domain"/>
</dbReference>
<dbReference type="InterPro" id="IPR000626">
    <property type="entry name" value="Ubiquitin-like_dom"/>
</dbReference>
<dbReference type="InterPro" id="IPR029071">
    <property type="entry name" value="Ubiquitin-like_domsf"/>
</dbReference>
<dbReference type="PANTHER" id="PTHR12329:SF16">
    <property type="entry name" value="BAG FAMILY MOLECULAR CHAPERONE REGULATOR 1"/>
    <property type="match status" value="1"/>
</dbReference>
<dbReference type="PANTHER" id="PTHR12329">
    <property type="entry name" value="BCL2-ASSOCIATED ATHANOGENE"/>
    <property type="match status" value="1"/>
</dbReference>
<dbReference type="Pfam" id="PF02179">
    <property type="entry name" value="BAG"/>
    <property type="match status" value="1"/>
</dbReference>
<dbReference type="Pfam" id="PF00240">
    <property type="entry name" value="ubiquitin"/>
    <property type="match status" value="1"/>
</dbReference>
<dbReference type="SMART" id="SM00264">
    <property type="entry name" value="BAG"/>
    <property type="match status" value="1"/>
</dbReference>
<dbReference type="SMART" id="SM00213">
    <property type="entry name" value="UBQ"/>
    <property type="match status" value="1"/>
</dbReference>
<dbReference type="SUPFAM" id="SSF63491">
    <property type="entry name" value="BAG domain"/>
    <property type="match status" value="1"/>
</dbReference>
<dbReference type="SUPFAM" id="SSF54236">
    <property type="entry name" value="Ubiquitin-like"/>
    <property type="match status" value="1"/>
</dbReference>
<dbReference type="PROSITE" id="PS51035">
    <property type="entry name" value="BAG"/>
    <property type="match status" value="1"/>
</dbReference>
<dbReference type="PROSITE" id="PS50053">
    <property type="entry name" value="UBIQUITIN_2"/>
    <property type="match status" value="1"/>
</dbReference>
<accession>Q99933</accession>
<accession>O75315</accession>
<accession>Q14414</accession>
<accession>Q53H32</accession>
<accession>Q5VZE8</accession>
<accession>Q5VZE9</accession>
<accession>Q5VZF0</accession>
<accession>Q96TG2</accession>
<accession>Q9Y2V4</accession>
<name>BAG1_HUMAN</name>
<organism>
    <name type="scientific">Homo sapiens</name>
    <name type="common">Human</name>
    <dbReference type="NCBI Taxonomy" id="9606"/>
    <lineage>
        <taxon>Eukaryota</taxon>
        <taxon>Metazoa</taxon>
        <taxon>Chordata</taxon>
        <taxon>Craniata</taxon>
        <taxon>Vertebrata</taxon>
        <taxon>Euteleostomi</taxon>
        <taxon>Mammalia</taxon>
        <taxon>Eutheria</taxon>
        <taxon>Euarchontoglires</taxon>
        <taxon>Primates</taxon>
        <taxon>Haplorrhini</taxon>
        <taxon>Catarrhini</taxon>
        <taxon>Hominidae</taxon>
        <taxon>Homo</taxon>
    </lineage>
</organism>
<reference key="1">
    <citation type="journal article" date="1995" name="Proc. Natl. Acad. Sci. U.S.A.">
        <title>A protein that interacts with members of the nuclear hormone receptor family: identification and cDNA cloning.</title>
        <authorList>
            <person name="Zeiner M."/>
            <person name="Gehring U."/>
        </authorList>
    </citation>
    <scope>NUCLEOTIDE SEQUENCE [MRNA] (ISOFORM 1)</scope>
    <source>
        <tissue>Liver</tissue>
    </source>
</reference>
<reference key="2">
    <citation type="journal article" date="1996" name="Genomics">
        <title>Cloning of cDNAs encoding the human BAG1 protein and localization of the human BAG1 gene to chromosome 9p12.</title>
        <authorList>
            <person name="Takayama S."/>
            <person name="Kochel K."/>
            <person name="Irie S."/>
            <person name="Inazawa J."/>
            <person name="Abe T."/>
            <person name="Sato T."/>
            <person name="Druck T."/>
            <person name="Huebner K."/>
            <person name="Reed J.C."/>
        </authorList>
    </citation>
    <scope>NUCLEOTIDE SEQUENCE [MRNA] (ISOFORM 1)</scope>
    <source>
        <tissue>Mammary gland</tissue>
    </source>
</reference>
<reference key="3">
    <citation type="submission" date="1997-09" db="EMBL/GenBank/DDBJ databases">
        <authorList>
            <person name="Takayama S."/>
        </authorList>
    </citation>
    <scope>SEQUENCE REVISION TO N-TERMINUS; 79; 84; 90; 245 AND 293</scope>
</reference>
<reference key="4">
    <citation type="journal article" date="2005" name="Int. J. Cancer">
        <title>Characterization of Hap/BAG-1 variants as RP1 binding proteins with antiapoptotic activity.</title>
        <authorList>
            <person name="Wadle A."/>
            <person name="Mischo A."/>
            <person name="Henrich P.P."/>
            <person name="Stenner-Lieven F."/>
            <person name="Scherer C."/>
            <person name="Imig J."/>
            <person name="Petersen G."/>
            <person name="Pfreundschuh M."/>
            <person name="Renner C."/>
        </authorList>
    </citation>
    <scope>NUCLEOTIDE SEQUENCE [MRNA] (ISOFORM 2)</scope>
    <scope>ANTI-APOPTOTIC ACTIVITY</scope>
    <scope>SUBCELLULAR LOCATION</scope>
    <scope>INTERACTION WITH MAPRE2</scope>
    <source>
        <tissue>T-cell</tissue>
    </source>
</reference>
<reference key="5">
    <citation type="submission" date="2005-04" db="EMBL/GenBank/DDBJ databases">
        <authorList>
            <person name="Suzuki Y."/>
            <person name="Sugano S."/>
            <person name="Totoki Y."/>
            <person name="Toyoda A."/>
            <person name="Takeda T."/>
            <person name="Sakaki Y."/>
            <person name="Tanaka A."/>
            <person name="Yokoyama S."/>
        </authorList>
    </citation>
    <scope>NUCLEOTIDE SEQUENCE [LARGE SCALE MRNA] (ISOFORM 1)</scope>
    <source>
        <tissue>Dermoid cancer</tissue>
    </source>
</reference>
<reference key="6">
    <citation type="journal article" date="2004" name="Nature">
        <title>DNA sequence and analysis of human chromosome 9.</title>
        <authorList>
            <person name="Humphray S.J."/>
            <person name="Oliver K."/>
            <person name="Hunt A.R."/>
            <person name="Plumb R.W."/>
            <person name="Loveland J.E."/>
            <person name="Howe K.L."/>
            <person name="Andrews T.D."/>
            <person name="Searle S."/>
            <person name="Hunt S.E."/>
            <person name="Scott C.E."/>
            <person name="Jones M.C."/>
            <person name="Ainscough R."/>
            <person name="Almeida J.P."/>
            <person name="Ambrose K.D."/>
            <person name="Ashwell R.I.S."/>
            <person name="Babbage A.K."/>
            <person name="Babbage S."/>
            <person name="Bagguley C.L."/>
            <person name="Bailey J."/>
            <person name="Banerjee R."/>
            <person name="Barker D.J."/>
            <person name="Barlow K.F."/>
            <person name="Bates K."/>
            <person name="Beasley H."/>
            <person name="Beasley O."/>
            <person name="Bird C.P."/>
            <person name="Bray-Allen S."/>
            <person name="Brown A.J."/>
            <person name="Brown J.Y."/>
            <person name="Burford D."/>
            <person name="Burrill W."/>
            <person name="Burton J."/>
            <person name="Carder C."/>
            <person name="Carter N.P."/>
            <person name="Chapman J.C."/>
            <person name="Chen Y."/>
            <person name="Clarke G."/>
            <person name="Clark S.Y."/>
            <person name="Clee C.M."/>
            <person name="Clegg S."/>
            <person name="Collier R.E."/>
            <person name="Corby N."/>
            <person name="Crosier M."/>
            <person name="Cummings A.T."/>
            <person name="Davies J."/>
            <person name="Dhami P."/>
            <person name="Dunn M."/>
            <person name="Dutta I."/>
            <person name="Dyer L.W."/>
            <person name="Earthrowl M.E."/>
            <person name="Faulkner L."/>
            <person name="Fleming C.J."/>
            <person name="Frankish A."/>
            <person name="Frankland J.A."/>
            <person name="French L."/>
            <person name="Fricker D.G."/>
            <person name="Garner P."/>
            <person name="Garnett J."/>
            <person name="Ghori J."/>
            <person name="Gilbert J.G.R."/>
            <person name="Glison C."/>
            <person name="Grafham D.V."/>
            <person name="Gribble S."/>
            <person name="Griffiths C."/>
            <person name="Griffiths-Jones S."/>
            <person name="Grocock R."/>
            <person name="Guy J."/>
            <person name="Hall R.E."/>
            <person name="Hammond S."/>
            <person name="Harley J.L."/>
            <person name="Harrison E.S.I."/>
            <person name="Hart E.A."/>
            <person name="Heath P.D."/>
            <person name="Henderson C.D."/>
            <person name="Hopkins B.L."/>
            <person name="Howard P.J."/>
            <person name="Howden P.J."/>
            <person name="Huckle E."/>
            <person name="Johnson C."/>
            <person name="Johnson D."/>
            <person name="Joy A.A."/>
            <person name="Kay M."/>
            <person name="Keenan S."/>
            <person name="Kershaw J.K."/>
            <person name="Kimberley A.M."/>
            <person name="King A."/>
            <person name="Knights A."/>
            <person name="Laird G.K."/>
            <person name="Langford C."/>
            <person name="Lawlor S."/>
            <person name="Leongamornlert D.A."/>
            <person name="Leversha M."/>
            <person name="Lloyd C."/>
            <person name="Lloyd D.M."/>
            <person name="Lovell J."/>
            <person name="Martin S."/>
            <person name="Mashreghi-Mohammadi M."/>
            <person name="Matthews L."/>
            <person name="McLaren S."/>
            <person name="McLay K.E."/>
            <person name="McMurray A."/>
            <person name="Milne S."/>
            <person name="Nickerson T."/>
            <person name="Nisbett J."/>
            <person name="Nordsiek G."/>
            <person name="Pearce A.V."/>
            <person name="Peck A.I."/>
            <person name="Porter K.M."/>
            <person name="Pandian R."/>
            <person name="Pelan S."/>
            <person name="Phillimore B."/>
            <person name="Povey S."/>
            <person name="Ramsey Y."/>
            <person name="Rand V."/>
            <person name="Scharfe M."/>
            <person name="Sehra H.K."/>
            <person name="Shownkeen R."/>
            <person name="Sims S.K."/>
            <person name="Skuce C.D."/>
            <person name="Smith M."/>
            <person name="Steward C.A."/>
            <person name="Swarbreck D."/>
            <person name="Sycamore N."/>
            <person name="Tester J."/>
            <person name="Thorpe A."/>
            <person name="Tracey A."/>
            <person name="Tromans A."/>
            <person name="Thomas D.W."/>
            <person name="Wall M."/>
            <person name="Wallis J.M."/>
            <person name="West A.P."/>
            <person name="Whitehead S.L."/>
            <person name="Willey D.L."/>
            <person name="Williams S.A."/>
            <person name="Wilming L."/>
            <person name="Wray P.W."/>
            <person name="Young L."/>
            <person name="Ashurst J.L."/>
            <person name="Coulson A."/>
            <person name="Blocker H."/>
            <person name="Durbin R.M."/>
            <person name="Sulston J.E."/>
            <person name="Hubbard T."/>
            <person name="Jackson M.J."/>
            <person name="Bentley D.R."/>
            <person name="Beck S."/>
            <person name="Rogers J."/>
            <person name="Dunham I."/>
        </authorList>
    </citation>
    <scope>NUCLEOTIDE SEQUENCE [LARGE SCALE GENOMIC DNA]</scope>
</reference>
<reference key="7">
    <citation type="submission" date="2005-09" db="EMBL/GenBank/DDBJ databases">
        <authorList>
            <person name="Mural R.J."/>
            <person name="Istrail S."/>
            <person name="Sutton G.G."/>
            <person name="Florea L."/>
            <person name="Halpern A.L."/>
            <person name="Mobarry C.M."/>
            <person name="Lippert R."/>
            <person name="Walenz B."/>
            <person name="Shatkay H."/>
            <person name="Dew I."/>
            <person name="Miller J.R."/>
            <person name="Flanigan M.J."/>
            <person name="Edwards N.J."/>
            <person name="Bolanos R."/>
            <person name="Fasulo D."/>
            <person name="Halldorsson B.V."/>
            <person name="Hannenhalli S."/>
            <person name="Turner R."/>
            <person name="Yooseph S."/>
            <person name="Lu F."/>
            <person name="Nusskern D.R."/>
            <person name="Shue B.C."/>
            <person name="Zheng X.H."/>
            <person name="Zhong F."/>
            <person name="Delcher A.L."/>
            <person name="Huson D.H."/>
            <person name="Kravitz S.A."/>
            <person name="Mouchard L."/>
            <person name="Reinert K."/>
            <person name="Remington K.A."/>
            <person name="Clark A.G."/>
            <person name="Waterman M.S."/>
            <person name="Eichler E.E."/>
            <person name="Adams M.D."/>
            <person name="Hunkapiller M.W."/>
            <person name="Myers E.W."/>
            <person name="Venter J.C."/>
        </authorList>
    </citation>
    <scope>NUCLEOTIDE SEQUENCE [LARGE SCALE GENOMIC DNA]</scope>
</reference>
<reference key="8">
    <citation type="journal article" date="2004" name="Genome Res.">
        <title>The status, quality, and expansion of the NIH full-length cDNA project: the Mammalian Gene Collection (MGC).</title>
        <authorList>
            <consortium name="The MGC Project Team"/>
        </authorList>
    </citation>
    <scope>NUCLEOTIDE SEQUENCE [LARGE SCALE MRNA] (ISOFORM 1)</scope>
    <source>
        <tissue>Cervix</tissue>
        <tissue>Lung</tissue>
    </source>
</reference>
<reference key="9">
    <citation type="journal article" date="1997" name="Biochem. J.">
        <title>Mammalian cells express two differently localized Bag-1 isoforms generated by alternative translation initiation.</title>
        <authorList>
            <person name="Packham G."/>
            <person name="Brimmell M."/>
            <person name="Cleveland J.L."/>
        </authorList>
    </citation>
    <scope>IDENTIFICATION OF ISOFORMS 1 AND 4</scope>
    <scope>ALTERNATIVE INITIATION</scope>
</reference>
<reference key="10">
    <citation type="journal article" date="1997" name="EMBO J.">
        <title>BAG-1 modulates the chaperone activity of Hsp70/Hsc70.</title>
        <authorList>
            <person name="Takayama S."/>
            <person name="Bimston D.N."/>
            <person name="Matsuzawa S.-I."/>
            <person name="Freeman B.C."/>
            <person name="Aime-Sempe C."/>
            <person name="Xie Z."/>
            <person name="Morimoto R.I."/>
            <person name="Reed J.C."/>
        </authorList>
    </citation>
    <scope>FUNCTION</scope>
    <scope>SUBUNIT</scope>
    <scope>INTERACTION WITH BCL2; HSP70 AND HSPA8</scope>
</reference>
<reference key="11">
    <citation type="journal article" date="1998" name="Cancer Res.">
        <title>Expression and location of Hsp70/Hsc-binding anti-apoptotic protein BAG-1 and its variants in normal tissues and tumor cell lines.</title>
        <authorList>
            <person name="Takayama S."/>
            <person name="Krajewski S."/>
            <person name="Krajewska M."/>
            <person name="Kitada S."/>
            <person name="Zapata J.M."/>
            <person name="Kochel K."/>
            <person name="Knee D."/>
            <person name="Scudiero D."/>
            <person name="Tudor G."/>
            <person name="Miller G.J."/>
            <person name="Miyashita T."/>
            <person name="Yamada M."/>
            <person name="Reed J.C."/>
        </authorList>
    </citation>
    <scope>IDENTIFICATION OF ISOFORMS 1; 3 AND 4</scope>
    <scope>ALTERNATIVE INITIATION</scope>
    <scope>SUBCELLULAR LOCATION</scope>
    <scope>INTERACTION WITH HSPA8</scope>
    <scope>INDUCTION</scope>
    <scope>TISSUE SPECIFICITY</scope>
</reference>
<reference key="12">
    <citation type="journal article" date="1998" name="EMBO J.">
        <title>p53-inducible human homologue of Drosophila seven in absentia (Siah) inhibits cell growth: suppression by BAG-1.</title>
        <authorList>
            <person name="Matsuzawa S."/>
            <person name="Takayama S."/>
            <person name="Froesch B.A."/>
            <person name="Zapata J.M."/>
            <person name="Reed J.C."/>
        </authorList>
    </citation>
    <scope>INTERACTION WITH SIAH1</scope>
</reference>
<reference key="13">
    <citation type="journal article" date="1999" name="J. Biol. Chem.">
        <title>An evolutionarily conserved family of Hsp70/Hsc70 molecular chaperone regulators.</title>
        <authorList>
            <person name="Takayama S."/>
            <person name="Xie Z."/>
            <person name="Reed J.C."/>
        </authorList>
    </citation>
    <scope>FUNCTION</scope>
</reference>
<reference key="14">
    <citation type="journal article" date="1999" name="J. Cell Biol.">
        <title>A nuclear action of the eukaryotic cochaperone RAP46 in downregulation of glucocorticoid receptor activity.</title>
        <authorList>
            <person name="Schneikert J."/>
            <person name="Huebner S."/>
            <person name="Martin E."/>
            <person name="Cato A.B.C."/>
        </authorList>
    </citation>
    <scope>INTERACTION WITH NR3C1</scope>
</reference>
<reference key="15">
    <citation type="journal article" date="2003" name="Mol. Cell. Biol.">
        <title>Human BAG-1 proteins bind to the cellular stress response protein GADD34 and interfere with GADD34 functions.</title>
        <authorList>
            <person name="Hung W.J."/>
            <person name="Roberson R.S."/>
            <person name="Taft J."/>
            <person name="Wu D.Y."/>
        </authorList>
    </citation>
    <scope>INTERACTION WITH PPP1R15A</scope>
    <scope>FUNCTION</scope>
</reference>
<reference key="16">
    <citation type="journal article" date="2010" name="Sci. Signal.">
        <title>Quantitative phosphoproteomics reveals widespread full phosphorylation site occupancy during mitosis.</title>
        <authorList>
            <person name="Olsen J.V."/>
            <person name="Vermeulen M."/>
            <person name="Santamaria A."/>
            <person name="Kumar C."/>
            <person name="Miller M.L."/>
            <person name="Jensen L.J."/>
            <person name="Gnad F."/>
            <person name="Cox J."/>
            <person name="Jensen T.S."/>
            <person name="Nigg E.A."/>
            <person name="Brunak S."/>
            <person name="Mann M."/>
        </authorList>
    </citation>
    <scope>PHOSPHORYLATION [LARGE SCALE ANALYSIS] AT SER-223</scope>
    <scope>IDENTIFICATION BY MASS SPECTROMETRY [LARGE SCALE ANALYSIS]</scope>
    <source>
        <tissue>Cervix carcinoma</tissue>
    </source>
</reference>
<reference key="17">
    <citation type="journal article" date="2012" name="Proc. Natl. Acad. Sci. U.S.A.">
        <title>N-terminal acetylome analyses and functional insights of the N-terminal acetyltransferase NatB.</title>
        <authorList>
            <person name="Van Damme P."/>
            <person name="Lasa M."/>
            <person name="Polevoda B."/>
            <person name="Gazquez C."/>
            <person name="Elosegui-Artola A."/>
            <person name="Kim D.S."/>
            <person name="De Juan-Pardo E."/>
            <person name="Demeyer K."/>
            <person name="Hole K."/>
            <person name="Larrea E."/>
            <person name="Timmerman E."/>
            <person name="Prieto J."/>
            <person name="Arnesen T."/>
            <person name="Sherman F."/>
            <person name="Gevaert K."/>
            <person name="Aldabe R."/>
        </authorList>
    </citation>
    <scope>IDENTIFICATION BY MASS SPECTROMETRY [LARGE SCALE ANALYSIS]</scope>
</reference>
<reference key="18">
    <citation type="journal article" date="2014" name="J. Biol. Chem.">
        <title>Binding of human nucleotide exchange factors to heat shock protein 70 (Hsp70) generates functionally distinct complexes in vitro.</title>
        <authorList>
            <person name="Rauch J.N."/>
            <person name="Gestwicki J.E."/>
        </authorList>
    </citation>
    <scope>FUNCTION</scope>
    <scope>INTERACTION WITH HSPA1A; HSPA1B AND HSPA8</scope>
</reference>
<reference key="19">
    <citation type="journal article" date="2016" name="J. Biol. Chem.">
        <title>Non-canonical interactions between heat shock cognate protein 70 (Hsc70) and Bcl2-associated anthanogene (BAG) co-chaperones are important for client release.</title>
        <authorList>
            <person name="Rauch J.N."/>
            <person name="Zuiderweg E.R."/>
            <person name="Gestwicki J.E."/>
        </authorList>
    </citation>
    <scope>FUNCTION</scope>
    <scope>INTERACTION WITH HSPA8</scope>
    <scope>MUTAGENESIS OF 308-ARG-LYS-309</scope>
</reference>
<reference key="20">
    <citation type="journal article" date="2001" name="Science">
        <title>Structure of a Bag/Hsc70 complex: convergent functional evolution of Hsp70 nucleotide exchange factors.</title>
        <authorList>
            <person name="Sondermann H."/>
            <person name="Scheufler C."/>
            <person name="Schneider C."/>
            <person name="Hohfeld J."/>
            <person name="Hartl F.U."/>
            <person name="Moarefi I."/>
        </authorList>
    </citation>
    <scope>X-RAY CRYSTALLOGRAPHY (1.9 ANGSTROMS) OF 222-334 IN COMPLEX WITH HSC70</scope>
</reference>
<reference key="21">
    <citation type="submission" date="2005-08" db="PDB data bank">
        <title>Solution structure of the ubiquitin domain of Bcl-2 binding athanogene-1.</title>
        <authorList>
            <consortium name="RIKEN structural genomics initiative (RSGI)"/>
        </authorList>
    </citation>
    <scope>STRUCTURE BY NMR OF 143-223</scope>
</reference>